<proteinExistence type="evidence at transcript level"/>
<protein>
    <recommendedName>
        <fullName>Mothers against decapentaplegic homolog 2</fullName>
        <shortName>MAD homolog 2</shortName>
        <shortName>Mothers against DPP homolog 2</shortName>
    </recommendedName>
    <alternativeName>
        <fullName>SMAD family member 2</fullName>
        <shortName>SMAD 2</shortName>
        <shortName>Smad2</shortName>
    </alternativeName>
</protein>
<reference key="1">
    <citation type="submission" date="2004-11" db="EMBL/GenBank/DDBJ databases">
        <authorList>
            <consortium name="The German cDNA consortium"/>
        </authorList>
    </citation>
    <scope>NUCLEOTIDE SEQUENCE [LARGE SCALE MRNA]</scope>
    <source>
        <tissue>Kidney</tissue>
    </source>
</reference>
<feature type="initiator methionine" description="Removed" evidence="2">
    <location>
        <position position="1"/>
    </location>
</feature>
<feature type="chain" id="PRO_0000290339" description="Mothers against decapentaplegic homolog 2">
    <location>
        <begin position="2"/>
        <end position="467"/>
    </location>
</feature>
<feature type="domain" description="MH1" evidence="4">
    <location>
        <begin position="10"/>
        <end position="176"/>
    </location>
</feature>
<feature type="domain" description="MH2" evidence="5">
    <location>
        <begin position="274"/>
        <end position="467"/>
    </location>
</feature>
<feature type="region of interest" description="Disordered" evidence="6">
    <location>
        <begin position="207"/>
        <end position="251"/>
    </location>
</feature>
<feature type="short sequence motif" description="PY-motif" evidence="1">
    <location>
        <begin position="221"/>
        <end position="225"/>
    </location>
</feature>
<feature type="compositionally biased region" description="Polar residues" evidence="6">
    <location>
        <begin position="207"/>
        <end position="217"/>
    </location>
</feature>
<feature type="compositionally biased region" description="Polar residues" evidence="6">
    <location>
        <begin position="233"/>
        <end position="243"/>
    </location>
</feature>
<feature type="binding site" evidence="1">
    <location>
        <position position="74"/>
    </location>
    <ligand>
        <name>Zn(2+)</name>
        <dbReference type="ChEBI" id="CHEBI:29105"/>
    </ligand>
</feature>
<feature type="binding site" evidence="1">
    <location>
        <position position="149"/>
    </location>
    <ligand>
        <name>Zn(2+)</name>
        <dbReference type="ChEBI" id="CHEBI:29105"/>
    </ligand>
</feature>
<feature type="binding site" evidence="1">
    <location>
        <position position="161"/>
    </location>
    <ligand>
        <name>Zn(2+)</name>
        <dbReference type="ChEBI" id="CHEBI:29105"/>
    </ligand>
</feature>
<feature type="binding site" evidence="1">
    <location>
        <position position="166"/>
    </location>
    <ligand>
        <name>Zn(2+)</name>
        <dbReference type="ChEBI" id="CHEBI:29105"/>
    </ligand>
</feature>
<feature type="modified residue" description="N-acetylserine" evidence="2">
    <location>
        <position position="2"/>
    </location>
</feature>
<feature type="modified residue" description="Phosphothreonine" evidence="2">
    <location>
        <position position="8"/>
    </location>
</feature>
<feature type="modified residue" description="N6-acetyllysine" evidence="2">
    <location>
        <position position="19"/>
    </location>
</feature>
<feature type="modified residue" description="Phosphothreonine" evidence="2">
    <location>
        <position position="220"/>
    </location>
</feature>
<feature type="modified residue" description="Phosphoserine; by CAMK2" evidence="2 5">
    <location>
        <position position="240"/>
    </location>
</feature>
<feature type="modified residue" description="Phosphoserine" evidence="2">
    <location>
        <position position="245"/>
    </location>
</feature>
<feature type="modified residue" description="Phosphoserine" evidence="2">
    <location>
        <position position="250"/>
    </location>
</feature>
<feature type="modified residue" description="Phosphoserine" evidence="2">
    <location>
        <position position="255"/>
    </location>
</feature>
<feature type="modified residue" description="Phosphoserine" evidence="2 5">
    <location>
        <position position="458"/>
    </location>
</feature>
<feature type="modified residue" description="Phosphoserine" evidence="2 5">
    <location>
        <position position="460"/>
    </location>
</feature>
<feature type="modified residue" description="Phosphoserine" evidence="2 5">
    <location>
        <position position="464"/>
    </location>
</feature>
<feature type="modified residue" description="Phosphoserine; by TGFBR1" evidence="2 5">
    <location>
        <position position="465"/>
    </location>
</feature>
<feature type="modified residue" description="Phosphoserine; by TGFBR1" evidence="2 5">
    <location>
        <position position="467"/>
    </location>
</feature>
<accession>Q5R7C0</accession>
<comment type="function">
    <text evidence="2 3">Receptor-regulated SMAD (R-SMAD) that is an intracellular signal transducer and transcriptional modulator activated by TGF-beta (transforming growth factor) and activin type 1 receptor kinases. Binds the TRE element in the promoter region of many genes that are regulated by TGF-beta and, on formation of the SMAD2/SMAD4 complex, activates transcription. Promotes TGFB1-mediated transcription of odontoblastic differentiation genes in dental papilla cells (By similarity). Positively regulates PDPK1 kinase activity by stimulating its dissociation from the 14-3-3 protein YWHAQ which acts as a negative regulator (By similarity).</text>
</comment>
<comment type="subunit">
    <text evidence="2 3">Monomer; in the absence of TGF-beta (By similarity). Heterodimer; in the presence of TGF-beta (By similarity). Forms a heterodimer with co-SMAD, SMAD4, in the nucleus to form the transactivation complex SMAD2/SMAD4 (By similarity). Found in a complex with SMAD3 and TRIM33 upon addition of TGF-beta (By similarity). Identified in a complex that contains at least ZNF451, SMAD2, SMAD3 and SMAD4 (By similarity). Interacts (via the MH2 domain) with ZFYVE9; may form trimers with the SMAD4 co-SMAD (By similarity). Interacts with TAZ/WWRT1 (By similarity). Interacts with FOXH1 (By similarity). Interacts with SNW1 (By similarity). Interacts with CREB-binding protein (CBP) and EP300 (By similarity). Interacts with SNON (By similarity). Interacts with ALK4/ACVR1B (By similarity). Interacts with SKOR1 (By similarity). Interacts with SKOR2 (By similarity). Interacts with PRDM16 (By similarity). Interacts (via MH2 domain) with LEMD3 (By similarity). Interacts with RBPMS (By similarity). Interacts with WWP1. Interacts (dephosphorylated form, via the MH1 and MH2 domains) with RANBP3 (via its C-terminal R domain); the interaction results in the export of dephosphorylated SMAD3 out of the nucleus and termination of the TGF-beta signaling (By similarity). Interacts with PDPK1 (via PH domain) (By similarity). Interacts with DAB2; the interactions are enhanced upon TGF-beta stimulation (By similarity). Interacts with USP15 (By similarity). Interacts with PPP5C (By similarity). Interacts with LDLRAD4 (via the SMAD interaction motif) (By similarity). Interacts (via MH2 domain) with PMEPA1 (via the SMAD interaction motif) (By similarity). Interacts with ZFHX3 (By similarity). Interacts with ZNF451 (By similarity). Interacts with SMURF2 when phosphorylated on Ser-465/467 (By similarity). Interacts with PPM1A (By similarity). Interacts with TGF-beta (By similarity). Interacts with TGFBR1 (By similarity). Interacts with TGIF (By similarity). Interacts with SMAD3 and TRIM33 (By similarity). Interacts with ZNF580 (By similarity). Interacts with NEDD4L in response to TGF-beta (By similarity). Interacts with HGS (By similarity). Interacts with AIP1 (By similarity). Interacts with WWP1 (By similarity). Interacts with PML (By similarity). Interacts weakly with ZNF8 (By similarity). Interacts (when phosphorylated) with RNF111; RNF111 acts as an enhancer of the transcriptional responses by mediating ubiquitination and degradation of SMAD2 inhibitors (By similarity). Interacts with YAP1 (when phosphorylated at 'Ser-55') (By similarity). Interacts when phosphorylated with IPO7; the interaction facilitates translocation of SMAD2 to the nucleus (By similarity). Interacts with MTMR4; negatively regulates TGF-beta signaling through SMAD2 dephosphorylation and retention in endosomes (By similarity).</text>
</comment>
<comment type="subcellular location">
    <subcellularLocation>
        <location evidence="2">Cytoplasm</location>
    </subcellularLocation>
    <subcellularLocation>
        <location evidence="2">Nucleus</location>
    </subcellularLocation>
    <text evidence="2 3">Cytoplasmic and nuclear in the absence of TGF-beta (By similarity). On TGF-beta stimulation, migrates to the nucleus when complexed with SMAD4 or with IPO7 (By similarity). On dephosphorylation by phosphatase PPM1A, released from the SMAD2/SMAD4 complex, and exported out of the nucleus by interaction with RANBP1 (By similarity). Localized mainly to the nucleus in the early stages of embryo development with expression becoming evident in the cytoplasm at the blastocyst and epiblast stages (By similarity).</text>
</comment>
<comment type="PTM">
    <text evidence="2">In response to TGF-beta, phosphorylated on the C-terminal SXS motif by TGF-beta and activin type 1 receptor kinases, phosphorylation declines progressively in a KMT5A-dependent manner. Phosphorylation in this motif is required for interaction with a number of proteins including SMURF2, SNON and SMAD4 in response to TGF-beta. Dephosphorylated in this motif by PPM1A leading to disruption of the SMAD2/3-SMAD4 complex, nuclear export and termination of the TGF-beta signaling. In response to decorin, the naturally occurring inhibitor of TGF-beta signaling, phosphorylated on Ser-240 by CaMK2. Phosphorylated by MAPK3 upon EGF stimulation; which increases transcriptional activity and stability, and is blocked by calmodulin. Phosphorylated by PDPK1 (By similarity).</text>
</comment>
<comment type="PTM">
    <text evidence="2">Acetylated on Lys-19 by coactivators in response to TGF-beta signaling, which increases transcriptional activity.</text>
</comment>
<comment type="PTM">
    <text evidence="2 3">In response to TGF-beta, ubiquitinated by NEDD4L; which promotes its degradation. Monoubiquitinated, leading to prevent DNA-binding (By similarity). Deubiquitination by USP15 alleviates inhibition and promotes activation of TGF-beta target genes (By similarity). Ubiquitinated by RNF111, leading to its degradation: only SMAD2 proteins that are 'in use' are targeted by RNF111, RNF111 playing a key role in activating SMAD2 and regulating its turnover (By similarity).</text>
</comment>
<comment type="similarity">
    <text evidence="7">Belongs to the dwarfin/SMAD family.</text>
</comment>
<name>SMAD2_PONAB</name>
<keyword id="KW-0007">Acetylation</keyword>
<keyword id="KW-0963">Cytoplasm</keyword>
<keyword id="KW-0238">DNA-binding</keyword>
<keyword id="KW-0479">Metal-binding</keyword>
<keyword id="KW-0539">Nucleus</keyword>
<keyword id="KW-0597">Phosphoprotein</keyword>
<keyword id="KW-1185">Reference proteome</keyword>
<keyword id="KW-0804">Transcription</keyword>
<keyword id="KW-0805">Transcription regulation</keyword>
<keyword id="KW-0832">Ubl conjugation</keyword>
<keyword id="KW-0862">Zinc</keyword>
<dbReference type="EMBL" id="CR860198">
    <property type="protein sequence ID" value="CAH92340.1"/>
    <property type="molecule type" value="mRNA"/>
</dbReference>
<dbReference type="RefSeq" id="NP_001126376.1">
    <property type="nucleotide sequence ID" value="NM_001132904.2"/>
</dbReference>
<dbReference type="SMR" id="Q5R7C0"/>
<dbReference type="STRING" id="9601.ENSPPYP00000010275"/>
<dbReference type="ABCD" id="Q5R7C0">
    <property type="antibodies" value="1 sequenced antibody"/>
</dbReference>
<dbReference type="GeneID" id="100173357"/>
<dbReference type="KEGG" id="pon:100173357"/>
<dbReference type="CTD" id="4087"/>
<dbReference type="eggNOG" id="KOG3701">
    <property type="taxonomic scope" value="Eukaryota"/>
</dbReference>
<dbReference type="InParanoid" id="Q5R7C0"/>
<dbReference type="OrthoDB" id="5794312at2759"/>
<dbReference type="Proteomes" id="UP000001595">
    <property type="component" value="Unplaced"/>
</dbReference>
<dbReference type="GO" id="GO:0005737">
    <property type="term" value="C:cytoplasm"/>
    <property type="evidence" value="ECO:0000250"/>
    <property type="project" value="UniProtKB"/>
</dbReference>
<dbReference type="GO" id="GO:0071144">
    <property type="term" value="C:heteromeric SMAD protein complex"/>
    <property type="evidence" value="ECO:0007669"/>
    <property type="project" value="TreeGrafter"/>
</dbReference>
<dbReference type="GO" id="GO:0005634">
    <property type="term" value="C:nucleus"/>
    <property type="evidence" value="ECO:0000250"/>
    <property type="project" value="UniProtKB"/>
</dbReference>
<dbReference type="GO" id="GO:0005667">
    <property type="term" value="C:transcription regulator complex"/>
    <property type="evidence" value="ECO:0000250"/>
    <property type="project" value="UniProtKB"/>
</dbReference>
<dbReference type="GO" id="GO:0000981">
    <property type="term" value="F:DNA-binding transcription factor activity, RNA polymerase II-specific"/>
    <property type="evidence" value="ECO:0007669"/>
    <property type="project" value="TreeGrafter"/>
</dbReference>
<dbReference type="GO" id="GO:0003690">
    <property type="term" value="F:double-stranded DNA binding"/>
    <property type="evidence" value="ECO:0000250"/>
    <property type="project" value="UniProtKB"/>
</dbReference>
<dbReference type="GO" id="GO:0070411">
    <property type="term" value="F:I-SMAD binding"/>
    <property type="evidence" value="ECO:0007669"/>
    <property type="project" value="TreeGrafter"/>
</dbReference>
<dbReference type="GO" id="GO:0046872">
    <property type="term" value="F:metal ion binding"/>
    <property type="evidence" value="ECO:0007669"/>
    <property type="project" value="UniProtKB-KW"/>
</dbReference>
<dbReference type="GO" id="GO:0000978">
    <property type="term" value="F:RNA polymerase II cis-regulatory region sequence-specific DNA binding"/>
    <property type="evidence" value="ECO:0007669"/>
    <property type="project" value="TreeGrafter"/>
</dbReference>
<dbReference type="GO" id="GO:0061629">
    <property type="term" value="F:RNA polymerase II-specific DNA-binding transcription factor binding"/>
    <property type="evidence" value="ECO:0000250"/>
    <property type="project" value="UniProtKB"/>
</dbReference>
<dbReference type="GO" id="GO:0032924">
    <property type="term" value="P:activin receptor signaling pathway"/>
    <property type="evidence" value="ECO:0007669"/>
    <property type="project" value="TreeGrafter"/>
</dbReference>
<dbReference type="GO" id="GO:0009952">
    <property type="term" value="P:anterior/posterior pattern specification"/>
    <property type="evidence" value="ECO:0000250"/>
    <property type="project" value="UniProtKB"/>
</dbReference>
<dbReference type="GO" id="GO:0045165">
    <property type="term" value="P:cell fate commitment"/>
    <property type="evidence" value="ECO:0000250"/>
    <property type="project" value="UniProtKB"/>
</dbReference>
<dbReference type="GO" id="GO:0035556">
    <property type="term" value="P:intracellular signal transduction"/>
    <property type="evidence" value="ECO:0000250"/>
    <property type="project" value="UniProtKB"/>
</dbReference>
<dbReference type="GO" id="GO:0001707">
    <property type="term" value="P:mesoderm formation"/>
    <property type="evidence" value="ECO:0000250"/>
    <property type="project" value="UniProtKB"/>
</dbReference>
<dbReference type="GO" id="GO:0071895">
    <property type="term" value="P:odontoblast differentiation"/>
    <property type="evidence" value="ECO:0000250"/>
    <property type="project" value="UniProtKB"/>
</dbReference>
<dbReference type="GO" id="GO:0048340">
    <property type="term" value="P:paraxial mesoderm morphogenesis"/>
    <property type="evidence" value="ECO:0000250"/>
    <property type="project" value="UniProtKB"/>
</dbReference>
<dbReference type="GO" id="GO:0045893">
    <property type="term" value="P:positive regulation of DNA-templated transcription"/>
    <property type="evidence" value="ECO:0000250"/>
    <property type="project" value="UniProtKB"/>
</dbReference>
<dbReference type="GO" id="GO:0045944">
    <property type="term" value="P:positive regulation of transcription by RNA polymerase II"/>
    <property type="evidence" value="ECO:0000250"/>
    <property type="project" value="UniProtKB"/>
</dbReference>
<dbReference type="GO" id="GO:0060395">
    <property type="term" value="P:SMAD protein signal transduction"/>
    <property type="evidence" value="ECO:0007669"/>
    <property type="project" value="TreeGrafter"/>
</dbReference>
<dbReference type="GO" id="GO:0007179">
    <property type="term" value="P:transforming growth factor beta receptor signaling pathway"/>
    <property type="evidence" value="ECO:0000250"/>
    <property type="project" value="UniProtKB"/>
</dbReference>
<dbReference type="CDD" id="cd10985">
    <property type="entry name" value="MH2_SMAD_2_3"/>
    <property type="match status" value="1"/>
</dbReference>
<dbReference type="FunFam" id="2.60.200.10:FF:000001">
    <property type="entry name" value="Mothers against decapentaplegic homolog"/>
    <property type="match status" value="1"/>
</dbReference>
<dbReference type="FunFam" id="3.90.520.10:FF:000007">
    <property type="entry name" value="Mothers against decapentaplegic homolog"/>
    <property type="match status" value="1"/>
</dbReference>
<dbReference type="Gene3D" id="2.60.200.10">
    <property type="match status" value="1"/>
</dbReference>
<dbReference type="Gene3D" id="3.90.520.10">
    <property type="entry name" value="SMAD MH1 domain"/>
    <property type="match status" value="1"/>
</dbReference>
<dbReference type="InterPro" id="IPR013790">
    <property type="entry name" value="Dwarfin"/>
</dbReference>
<dbReference type="InterPro" id="IPR003619">
    <property type="entry name" value="MAD_homology1_Dwarfin-type"/>
</dbReference>
<dbReference type="InterPro" id="IPR013019">
    <property type="entry name" value="MAD_homology_MH1"/>
</dbReference>
<dbReference type="InterPro" id="IPR017855">
    <property type="entry name" value="SMAD-like_dom_sf"/>
</dbReference>
<dbReference type="InterPro" id="IPR001132">
    <property type="entry name" value="SMAD_dom_Dwarfin-type"/>
</dbReference>
<dbReference type="InterPro" id="IPR008984">
    <property type="entry name" value="SMAD_FHA_dom_sf"/>
</dbReference>
<dbReference type="InterPro" id="IPR036578">
    <property type="entry name" value="SMAD_MH1_sf"/>
</dbReference>
<dbReference type="PANTHER" id="PTHR13703:SF42">
    <property type="entry name" value="MOTHERS AGAINST DECAPENTAPLEGIC HOMOLOG 2"/>
    <property type="match status" value="1"/>
</dbReference>
<dbReference type="PANTHER" id="PTHR13703">
    <property type="entry name" value="SMAD"/>
    <property type="match status" value="1"/>
</dbReference>
<dbReference type="Pfam" id="PF03165">
    <property type="entry name" value="MH1"/>
    <property type="match status" value="1"/>
</dbReference>
<dbReference type="Pfam" id="PF03166">
    <property type="entry name" value="MH2"/>
    <property type="match status" value="1"/>
</dbReference>
<dbReference type="SMART" id="SM00523">
    <property type="entry name" value="DWA"/>
    <property type="match status" value="1"/>
</dbReference>
<dbReference type="SMART" id="SM00524">
    <property type="entry name" value="DWB"/>
    <property type="match status" value="1"/>
</dbReference>
<dbReference type="SUPFAM" id="SSF56366">
    <property type="entry name" value="SMAD MH1 domain"/>
    <property type="match status" value="1"/>
</dbReference>
<dbReference type="SUPFAM" id="SSF49879">
    <property type="entry name" value="SMAD/FHA domain"/>
    <property type="match status" value="1"/>
</dbReference>
<dbReference type="PROSITE" id="PS51075">
    <property type="entry name" value="MH1"/>
    <property type="match status" value="1"/>
</dbReference>
<dbReference type="PROSITE" id="PS51076">
    <property type="entry name" value="MH2"/>
    <property type="match status" value="1"/>
</dbReference>
<sequence length="467" mass="52307">MSSILPFTPPVVKRLLGWKKSAGGSGGAGGGEQNGQEEKWCEKAVKSLVKKLKKTGRLDELEKAITTQNCNTKCVTIPSTCSEIWGLSTPNTIDQWDTTGLYSFSEQTRSLDGRLQVSHRKGLPHVIYCRLWRWPDLHSHHELKAIENCEYAFNLKEDEVCVNPYHYQRVETPVLPPVLVPRHTEILTELPPLDDYTHSIPENTNFPAGIEPQSNYIPETPPPGYISEDGETSDQQLNQSMDTGSPAELSPTTLSPVNHSLDLQPVTYSEPAFWCSIAYYELNQRVGETFHASQPSLTVDGFTDPSNSERFCLGLLSNVNRNATVEMTRRHIGRGVRLYYIGGEVFAECLSDSAIFVQSPNCNQRYGWHPATVCKIPPGCNLKIFNNQEFAALLAQSVNQGFEAVYQLTRMCTIRMSFVKGWGAEYRRQTVTSTPCWIELHLNGPLQWLDKVLTQMGSPSVRCSSMS</sequence>
<organism>
    <name type="scientific">Pongo abelii</name>
    <name type="common">Sumatran orangutan</name>
    <name type="synonym">Pongo pygmaeus abelii</name>
    <dbReference type="NCBI Taxonomy" id="9601"/>
    <lineage>
        <taxon>Eukaryota</taxon>
        <taxon>Metazoa</taxon>
        <taxon>Chordata</taxon>
        <taxon>Craniata</taxon>
        <taxon>Vertebrata</taxon>
        <taxon>Euteleostomi</taxon>
        <taxon>Mammalia</taxon>
        <taxon>Eutheria</taxon>
        <taxon>Euarchontoglires</taxon>
        <taxon>Primates</taxon>
        <taxon>Haplorrhini</taxon>
        <taxon>Catarrhini</taxon>
        <taxon>Hominidae</taxon>
        <taxon>Pongo</taxon>
    </lineage>
</organism>
<evidence type="ECO:0000250" key="1"/>
<evidence type="ECO:0000250" key="2">
    <source>
        <dbReference type="UniProtKB" id="Q15796"/>
    </source>
</evidence>
<evidence type="ECO:0000250" key="3">
    <source>
        <dbReference type="UniProtKB" id="Q62432"/>
    </source>
</evidence>
<evidence type="ECO:0000255" key="4">
    <source>
        <dbReference type="PROSITE-ProRule" id="PRU00438"/>
    </source>
</evidence>
<evidence type="ECO:0000255" key="5">
    <source>
        <dbReference type="PROSITE-ProRule" id="PRU00439"/>
    </source>
</evidence>
<evidence type="ECO:0000256" key="6">
    <source>
        <dbReference type="SAM" id="MobiDB-lite"/>
    </source>
</evidence>
<evidence type="ECO:0000305" key="7"/>
<gene>
    <name type="primary">SMAD2</name>
</gene>